<reference key="1">
    <citation type="journal article" date="2004" name="Nature">
        <title>Genome evolution in yeasts.</title>
        <authorList>
            <person name="Dujon B."/>
            <person name="Sherman D."/>
            <person name="Fischer G."/>
            <person name="Durrens P."/>
            <person name="Casaregola S."/>
            <person name="Lafontaine I."/>
            <person name="de Montigny J."/>
            <person name="Marck C."/>
            <person name="Neuveglise C."/>
            <person name="Talla E."/>
            <person name="Goffard N."/>
            <person name="Frangeul L."/>
            <person name="Aigle M."/>
            <person name="Anthouard V."/>
            <person name="Babour A."/>
            <person name="Barbe V."/>
            <person name="Barnay S."/>
            <person name="Blanchin S."/>
            <person name="Beckerich J.-M."/>
            <person name="Beyne E."/>
            <person name="Bleykasten C."/>
            <person name="Boisrame A."/>
            <person name="Boyer J."/>
            <person name="Cattolico L."/>
            <person name="Confanioleri F."/>
            <person name="de Daruvar A."/>
            <person name="Despons L."/>
            <person name="Fabre E."/>
            <person name="Fairhead C."/>
            <person name="Ferry-Dumazet H."/>
            <person name="Groppi A."/>
            <person name="Hantraye F."/>
            <person name="Hennequin C."/>
            <person name="Jauniaux N."/>
            <person name="Joyet P."/>
            <person name="Kachouri R."/>
            <person name="Kerrest A."/>
            <person name="Koszul R."/>
            <person name="Lemaire M."/>
            <person name="Lesur I."/>
            <person name="Ma L."/>
            <person name="Muller H."/>
            <person name="Nicaud J.-M."/>
            <person name="Nikolski M."/>
            <person name="Oztas S."/>
            <person name="Ozier-Kalogeropoulos O."/>
            <person name="Pellenz S."/>
            <person name="Potier S."/>
            <person name="Richard G.-F."/>
            <person name="Straub M.-L."/>
            <person name="Suleau A."/>
            <person name="Swennen D."/>
            <person name="Tekaia F."/>
            <person name="Wesolowski-Louvel M."/>
            <person name="Westhof E."/>
            <person name="Wirth B."/>
            <person name="Zeniou-Meyer M."/>
            <person name="Zivanovic Y."/>
            <person name="Bolotin-Fukuhara M."/>
            <person name="Thierry A."/>
            <person name="Bouchier C."/>
            <person name="Caudron B."/>
            <person name="Scarpelli C."/>
            <person name="Gaillardin C."/>
            <person name="Weissenbach J."/>
            <person name="Wincker P."/>
            <person name="Souciet J.-L."/>
        </authorList>
    </citation>
    <scope>NUCLEOTIDE SEQUENCE [LARGE SCALE GENOMIC DNA]</scope>
    <source>
        <strain>ATCC 8585 / CBS 2359 / DSM 70799 / NBRC 1267 / NRRL Y-1140 / WM37</strain>
    </source>
</reference>
<protein>
    <recommendedName>
        <fullName>Protein CFT1</fullName>
    </recommendedName>
    <alternativeName>
        <fullName>Cleavage factor two protein 1</fullName>
    </alternativeName>
</protein>
<accession>Q6CTT2</accession>
<organism>
    <name type="scientific">Kluyveromyces lactis (strain ATCC 8585 / CBS 2359 / DSM 70799 / NBRC 1267 / NRRL Y-1140 / WM37)</name>
    <name type="common">Yeast</name>
    <name type="synonym">Candida sphaerica</name>
    <dbReference type="NCBI Taxonomy" id="284590"/>
    <lineage>
        <taxon>Eukaryota</taxon>
        <taxon>Fungi</taxon>
        <taxon>Dikarya</taxon>
        <taxon>Ascomycota</taxon>
        <taxon>Saccharomycotina</taxon>
        <taxon>Saccharomycetes</taxon>
        <taxon>Saccharomycetales</taxon>
        <taxon>Saccharomycetaceae</taxon>
        <taxon>Kluyveromyces</taxon>
    </lineage>
</organism>
<gene>
    <name type="primary">CFT1</name>
    <name type="ordered locus">KLLA0C10274g</name>
</gene>
<evidence type="ECO:0000250" key="1"/>
<evidence type="ECO:0000305" key="2"/>
<dbReference type="EMBL" id="CR382123">
    <property type="protein sequence ID" value="CAH01508.1"/>
    <property type="molecule type" value="Genomic_DNA"/>
</dbReference>
<dbReference type="RefSeq" id="XP_452657.1">
    <property type="nucleotide sequence ID" value="XM_452657.1"/>
</dbReference>
<dbReference type="SMR" id="Q6CTT2"/>
<dbReference type="FunCoup" id="Q6CTT2">
    <property type="interactions" value="1194"/>
</dbReference>
<dbReference type="STRING" id="284590.Q6CTT2"/>
<dbReference type="PaxDb" id="284590-Q6CTT2"/>
<dbReference type="KEGG" id="kla:KLLA0_C10274g"/>
<dbReference type="eggNOG" id="KOG1896">
    <property type="taxonomic scope" value="Eukaryota"/>
</dbReference>
<dbReference type="HOGENOM" id="CLU_002414_0_0_1"/>
<dbReference type="InParanoid" id="Q6CTT2"/>
<dbReference type="OMA" id="PMTKFKL"/>
<dbReference type="Proteomes" id="UP000000598">
    <property type="component" value="Chromosome C"/>
</dbReference>
<dbReference type="GO" id="GO:0005634">
    <property type="term" value="C:nucleus"/>
    <property type="evidence" value="ECO:0007669"/>
    <property type="project" value="UniProtKB-SubCell"/>
</dbReference>
<dbReference type="GO" id="GO:0003723">
    <property type="term" value="F:RNA binding"/>
    <property type="evidence" value="ECO:0007669"/>
    <property type="project" value="UniProtKB-KW"/>
</dbReference>
<dbReference type="GO" id="GO:0006397">
    <property type="term" value="P:mRNA processing"/>
    <property type="evidence" value="ECO:0007669"/>
    <property type="project" value="UniProtKB-KW"/>
</dbReference>
<dbReference type="Gene3D" id="2.130.10.10">
    <property type="entry name" value="YVTN repeat-like/Quinoprotein amine dehydrogenase"/>
    <property type="match status" value="2"/>
</dbReference>
<dbReference type="InterPro" id="IPR018846">
    <property type="entry name" value="Beta-prop_RSE1/DDB1/CPSF1_1st"/>
</dbReference>
<dbReference type="InterPro" id="IPR004871">
    <property type="entry name" value="Cleavage/polyA-sp_fac_asu_C"/>
</dbReference>
<dbReference type="InterPro" id="IPR050358">
    <property type="entry name" value="RSE1/DDB1/CFT1/CPSF1"/>
</dbReference>
<dbReference type="InterPro" id="IPR015943">
    <property type="entry name" value="WD40/YVTN_repeat-like_dom_sf"/>
</dbReference>
<dbReference type="PANTHER" id="PTHR10644">
    <property type="entry name" value="DNA REPAIR/RNA PROCESSING CPSF FAMILY"/>
    <property type="match status" value="1"/>
</dbReference>
<dbReference type="Pfam" id="PF10433">
    <property type="entry name" value="Beta-prop_RSE1_1st"/>
    <property type="match status" value="1"/>
</dbReference>
<dbReference type="Pfam" id="PF03178">
    <property type="entry name" value="CPSF_A"/>
    <property type="match status" value="1"/>
</dbReference>
<dbReference type="SUPFAM" id="SSF69304">
    <property type="entry name" value="Tricorn protease N-terminal domain"/>
    <property type="match status" value="1"/>
</dbReference>
<sequence length="1300" mass="147932">MNVFDEILQPTVVNKCLHGNFTSAEREEYVVARTNVLSVFRVSRAQKLVLAYEWKLAGKIIDMQLLPQIGSPLKMLAILSSKSKVSLVRFDPVAESLETLSLHYYHDKFVNLSTSSLKTESIMAVDPLFRCLLVFNEDVLAILPLKLNTEDMEIDEDENGIKEPMAKRLKRNQGITSDSIIMPISSLHKSLKHVYDIKWLNNFSKPTVGILYQPVLAWCGNEKVLGNTMRYMVLSLDVEDEKTTVIAELADLPNDLHTLVPLKRGYVLIGVNELLYISASGALQSCIRLNTFATSSINTRITDNSDMNIFLSKSSIYFYKALKRHDLLILIDENCRMYNIITESEGNLLTKFDCVQVPIVNEIFKNSRLPLSVCGDLNLETGRVLIGFLSGDAMFLQLKNLKVAFAAKRQLVETVDDDDDEYSALYGESQNNTHTRIVETQEPFDISLLDSIFNIGPLTSLTIGKVASVEPTIQRLPNPNKDEFSIVATSGVGRGSHLTALHSTVQPHIEQALKFTSATRIWNLKIKGKDKYLVTTDADKEKSDVYQIDRNFEPFRAQDFRKDSRTIGMETMDDDKRILQVTSGGLYLFDVDFKRLARLTIDIEIVHACIIDPYILFTDARGNIKIYQLDSKNKKKFIKFKLPEALNEIIITSGSIFKSNICNKFLHGLENSSQEQLLFTFVTGDNQVIFFTEKHNDRIFQLNGVDQLEDMLFISTYQIPEEMNPDPSIKQIMLNRLGHHKKEEFLTILTFGGEIYQYKKSTKHSGKLLKCKSHPLITGAPNNAYPQGVNKIERVAHYFPNYNGYSVVFITGQVPYIIIKEDNSVCRIFRMTNIPIVTMARWGKNSVMCVDNIKNARVMKLDPECYYGNTQILRKIIIEDVVEEFETLGNIAYHERTGMYIISYTKFIEYQALSEDGEPLVGYDPSKPNSTGYKSGLLLINPLTWNIIDRLDLSENSMVNDIKTMLIQLNSKTRRKRELVIIGSSFVKEEDQPSTGCLLVLDITEVVAEPGKPDSNFKFKQLFEEEIRGSVNAVCEISGRFMIGQSSKALVRDMQEDNSAVPVAFLDMPVFITDAKSFSNLMIIGDSMQGFTFVGFDAEPYRMIVLGKSTSKFQVMNLEFLVNNGNINFIVTDRQNHLHVLRYAPDEANSLSGQRLVHCNSFNMFTTNNYMKLVRKHVEFGSKTSNYIALGCQTDGSIFRMIPLNEASYRRFYLVQQQLLDHEIPLAGFNTKMERLDNEYYHKGHSLRPTLDSQVLKKYIHLPITKRTTIENRVGRHASTELWHDLIDIEFSLRSLTNSN</sequence>
<proteinExistence type="inferred from homology"/>
<keyword id="KW-0507">mRNA processing</keyword>
<keyword id="KW-0539">Nucleus</keyword>
<keyword id="KW-1185">Reference proteome</keyword>
<keyword id="KW-0694">RNA-binding</keyword>
<comment type="function">
    <text evidence="1">RNA-binding component of the cleavage and polyadenylation factor (CPF) complex, which plays a key role in polyadenylation-dependent pre-mRNA 3'-end formation and cooperates with cleavage factors including the CFIA complex and NAB4/CFIB. Involved in poly(A) site recognition. May be involved in coupling transcription termination and mRNA 3'-end formation (By similarity).</text>
</comment>
<comment type="subcellular location">
    <subcellularLocation>
        <location evidence="1">Nucleus</location>
    </subcellularLocation>
</comment>
<comment type="similarity">
    <text evidence="2">Belongs to the CFT1 family.</text>
</comment>
<feature type="chain" id="PRO_0000290631" description="Protein CFT1">
    <location>
        <begin position="1"/>
        <end position="1300"/>
    </location>
</feature>
<name>CFT1_KLULA</name>